<proteinExistence type="evidence at transcript level"/>
<keyword id="KW-0067">ATP-binding</keyword>
<keyword id="KW-1003">Cell membrane</keyword>
<keyword id="KW-0325">Glycoprotein</keyword>
<keyword id="KW-0472">Membrane</keyword>
<keyword id="KW-0547">Nucleotide-binding</keyword>
<keyword id="KW-0677">Repeat</keyword>
<keyword id="KW-0812">Transmembrane</keyword>
<keyword id="KW-1133">Transmembrane helix</keyword>
<keyword id="KW-0813">Transport</keyword>
<evidence type="ECO:0000250" key="1">
    <source>
        <dbReference type="UniProtKB" id="A0A059J0G5"/>
    </source>
</evidence>
<evidence type="ECO:0000250" key="2">
    <source>
        <dbReference type="UniProtKB" id="F2SHL1"/>
    </source>
</evidence>
<evidence type="ECO:0000255" key="3"/>
<evidence type="ECO:0000255" key="4">
    <source>
        <dbReference type="PROSITE-ProRule" id="PRU00434"/>
    </source>
</evidence>
<evidence type="ECO:0000255" key="5">
    <source>
        <dbReference type="PROSITE-ProRule" id="PRU00498"/>
    </source>
</evidence>
<evidence type="ECO:0000256" key="6">
    <source>
        <dbReference type="SAM" id="MobiDB-lite"/>
    </source>
</evidence>
<evidence type="ECO:0000269" key="7">
    <source>
    </source>
</evidence>
<evidence type="ECO:0000303" key="8">
    <source>
    </source>
</evidence>
<evidence type="ECO:0000305" key="9"/>
<sequence>MASQPPQPPSGQPDTQYEEYQSEVITETTNRPTPAADVYEITPTNDVMDDRYEHEHDDYESGAMYETVRTWSPQSRPELVRIASVFSRIDSHPDVAPTTEDGGQLNRRDTLAGVKIGDPVLDPTKPEFDFYKWARMFTHVMEKEGIKRNRTGVMFRNLTVLGSGSAVQYQDTFLSPFAAPFRPGELCGKGRNPEKVILHDFNGAIREGELLMVLGRPGSGCSTFLKAICGELHGLQKKKESIIHYNGVSQHTFKKELRGEAVYSAEDEHHFPHLTVGQTLEFAAAARTPSKRVLGLSRKDFSTHLARVMMSVFGLSHTYNTKVGDDYVRGVSGGERKRVSIAEIALSGAPICCWDNSTRGLDSATALEFTKALKIGSQVGGITQCLAIYQASQAIYDIFDKVIVLYEGRQIFFGPTRIAKQYFEEMGWYCPPRQTTADFLTSVTNPKERIAKEGYENRVPRTAVEFERYWKQSQNNKLLLADMDRFEAEYPPEEGHLEKLRETHGQAQAKHTASKSPYRISVPMQVKLCTVRAYQRLWGDKSSTIATNISQIMMALIIGSLFFDTPQTTDGFFAKGSVIFFAILLNGLMSITEINGLCKATDPIVPNAQRPIVVKHVNFAFYHAYSEALAGIVADIPIKFLLALVFNIIIYFLGGLERSAAKFFIFFLFTFITILTMSAIFRTLAAATKTIPQALALAGVMILALVIYTGFTLQPSYMHPWFKWILYINPIAYAYEALLVNEVHGNRYRCATPIPPYGSGTNFACAVAGAVPGEMSVSGDAWVESSYDYSYAHIWRNLGILLGFLAFFYFVYLVVSELNLSSASSAEFLVFRRGHLPKNFQGSKDEEAAAGGVMYPNDPARLPPTNTNGAAGETAPGGSTVAVIPPQKDIFTWRNVTYDITIKGEPRRLLDNISGWVRPGTLTALMGVSGAGKTTLLDALAQRTTMGVITGDMLVNGRPLDSSFQRKTGYVQQQDLHLETTTVREALRFSADLRQPKSVSRKEKYEYVEDVIKMLSMEDFSEAVVGNPGEGLNVEQRKLLTIGVELAAKPQLLLFLDEPTSGLDSQSSWSIVTFLRKLADNGQAVLSTIHQPSGILFEQFDRLLFLAKGGRTVYFGDIGKNSETLLNYFETHGAEPCGPSENPAEYMLNVVGAGPSGKSKIDWPAVWKESEESRHVQQELDRIQSETSKRNEGHGQSAEKEPGEFAMPFTSQLYCVTTRVFQQYWRTPSYIWGKLLLGLTSALFIGFSFFLQNSSMAGLQNSLFSIFMLTTIFSSLVQQIMPRFVTQRDLFEVRERPSRAYSWKVFLLANIIVEIPYQILLGIIAWASLFYPTFGAHLSSERQGILLLYCVQFFIFASTFAQMIIAGLPDAETAGGIATTMFGLMVTFNGVLQKPNALPGFWRFMWRVSPITYTVGGLAATSLHSREVKCAQNELAIFDPPSGATCAQYLQKLVEAGAPGKLYNPMSTSQCQYCPLSSGDQFLGGSEIHWSDRWRNFGIGWAYIVFNIFATVALYYLIRVRKSSGRPNRIISVITYHLSQFGTYCRAFITGRKEKCPRKREQIGKIY</sequence>
<organism>
    <name type="scientific">Trichophyton equinum (strain ATCC MYA-4606 / CBS 127.97)</name>
    <name type="common">Horse ringworm fungus</name>
    <dbReference type="NCBI Taxonomy" id="559882"/>
    <lineage>
        <taxon>Eukaryota</taxon>
        <taxon>Fungi</taxon>
        <taxon>Dikarya</taxon>
        <taxon>Ascomycota</taxon>
        <taxon>Pezizomycotina</taxon>
        <taxon>Eurotiomycetes</taxon>
        <taxon>Eurotiomycetidae</taxon>
        <taxon>Onygenales</taxon>
        <taxon>Arthrodermataceae</taxon>
        <taxon>Trichophyton</taxon>
    </lineage>
</organism>
<gene>
    <name evidence="8" type="primary">MDR1</name>
    <name type="ORF">TEQG_01571</name>
</gene>
<comment type="function">
    <text evidence="1">Pleiotropic ABC efflux transporter that may be involved in the modulation susceptibility to a wide range of unrelated cytotoxic compounds.</text>
</comment>
<comment type="catalytic activity">
    <reaction evidence="2">
        <text>voriconazole(in) + ATP + H2O = voriconazole(out) + ADP + phosphate + H(+)</text>
        <dbReference type="Rhea" id="RHEA:61912"/>
        <dbReference type="ChEBI" id="CHEBI:10023"/>
        <dbReference type="ChEBI" id="CHEBI:15377"/>
        <dbReference type="ChEBI" id="CHEBI:15378"/>
        <dbReference type="ChEBI" id="CHEBI:30616"/>
        <dbReference type="ChEBI" id="CHEBI:43474"/>
        <dbReference type="ChEBI" id="CHEBI:456216"/>
    </reaction>
    <physiologicalReaction direction="left-to-right" evidence="2">
        <dbReference type="Rhea" id="RHEA:61913"/>
    </physiologicalReaction>
</comment>
<comment type="catalytic activity">
    <reaction evidence="2">
        <text>fluconazole(in) + ATP + H2O = fluconazole(out) + ADP + phosphate + H(+)</text>
        <dbReference type="Rhea" id="RHEA:61916"/>
        <dbReference type="ChEBI" id="CHEBI:15377"/>
        <dbReference type="ChEBI" id="CHEBI:15378"/>
        <dbReference type="ChEBI" id="CHEBI:30616"/>
        <dbReference type="ChEBI" id="CHEBI:43474"/>
        <dbReference type="ChEBI" id="CHEBI:46081"/>
        <dbReference type="ChEBI" id="CHEBI:456216"/>
    </reaction>
    <physiologicalReaction direction="left-to-right" evidence="2">
        <dbReference type="Rhea" id="RHEA:61917"/>
    </physiologicalReaction>
</comment>
<comment type="catalytic activity">
    <reaction evidence="2">
        <text>(R)-miconazole(in) + ATP + H2O = (R)-miconazole(out) + ADP + phosphate + H(+)</text>
        <dbReference type="Rhea" id="RHEA:61928"/>
        <dbReference type="ChEBI" id="CHEBI:15377"/>
        <dbReference type="ChEBI" id="CHEBI:15378"/>
        <dbReference type="ChEBI" id="CHEBI:30616"/>
        <dbReference type="ChEBI" id="CHEBI:43474"/>
        <dbReference type="ChEBI" id="CHEBI:82894"/>
        <dbReference type="ChEBI" id="CHEBI:456216"/>
    </reaction>
    <physiologicalReaction direction="left-to-right" evidence="2">
        <dbReference type="Rhea" id="RHEA:61929"/>
    </physiologicalReaction>
</comment>
<comment type="catalytic activity">
    <reaction evidence="2">
        <text>(S)-miconazole(in) + ATP + H2O = (S)-miconazole(out) + ADP + phosphate + H(+)</text>
        <dbReference type="Rhea" id="RHEA:61932"/>
        <dbReference type="ChEBI" id="CHEBI:15377"/>
        <dbReference type="ChEBI" id="CHEBI:15378"/>
        <dbReference type="ChEBI" id="CHEBI:30616"/>
        <dbReference type="ChEBI" id="CHEBI:43474"/>
        <dbReference type="ChEBI" id="CHEBI:82897"/>
        <dbReference type="ChEBI" id="CHEBI:456216"/>
    </reaction>
    <physiologicalReaction direction="left-to-right" evidence="2">
        <dbReference type="Rhea" id="RHEA:61933"/>
    </physiologicalReaction>
</comment>
<comment type="subcellular location">
    <subcellularLocation>
        <location evidence="9">Cell membrane</location>
        <topology evidence="3">Multi-pass membrane protein</topology>
    </subcellularLocation>
</comment>
<comment type="induction">
    <text evidence="7">Expression is induced upon exposure to itraconazole.</text>
</comment>
<comment type="similarity">
    <text evidence="9">Belongs to the ABC transporter superfamily. ABCG family. PDR (TC 3.A.1.205) subfamily.</text>
</comment>
<feature type="chain" id="PRO_0000447176" description="ABC multidrug transporter MDR1">
    <location>
        <begin position="1"/>
        <end position="1567"/>
    </location>
</feature>
<feature type="transmembrane region" description="Helical" evidence="3">
    <location>
        <begin position="543"/>
        <end position="563"/>
    </location>
</feature>
<feature type="transmembrane region" description="Helical" evidence="3">
    <location>
        <begin position="571"/>
        <end position="591"/>
    </location>
</feature>
<feature type="transmembrane region" description="Helical" evidence="3">
    <location>
        <begin position="636"/>
        <end position="656"/>
    </location>
</feature>
<feature type="transmembrane region" description="Helical" evidence="3">
    <location>
        <begin position="661"/>
        <end position="681"/>
    </location>
</feature>
<feature type="transmembrane region" description="Helical" evidence="3">
    <location>
        <begin position="691"/>
        <end position="711"/>
    </location>
</feature>
<feature type="transmembrane region" description="Helical" evidence="3">
    <location>
        <begin position="798"/>
        <end position="818"/>
    </location>
</feature>
<feature type="transmembrane region" description="Helical" evidence="3">
    <location>
        <begin position="1231"/>
        <end position="1251"/>
    </location>
</feature>
<feature type="transmembrane region" description="Helical" evidence="3">
    <location>
        <begin position="1257"/>
        <end position="1277"/>
    </location>
</feature>
<feature type="transmembrane region" description="Helical" evidence="3">
    <location>
        <begin position="1305"/>
        <end position="1325"/>
    </location>
</feature>
<feature type="transmembrane region" description="Helical" evidence="3">
    <location>
        <begin position="1345"/>
        <end position="1365"/>
    </location>
</feature>
<feature type="transmembrane region" description="Helical" evidence="3">
    <location>
        <begin position="1372"/>
        <end position="1392"/>
    </location>
</feature>
<feature type="transmembrane region" description="Helical" evidence="3">
    <location>
        <begin position="1498"/>
        <end position="1518"/>
    </location>
</feature>
<feature type="domain" description="ABC transporter 1" evidence="4">
    <location>
        <begin position="167"/>
        <end position="432"/>
    </location>
</feature>
<feature type="domain" description="ABC transporter 2" evidence="4">
    <location>
        <begin position="891"/>
        <end position="1134"/>
    </location>
</feature>
<feature type="region of interest" description="Disordered" evidence="6">
    <location>
        <begin position="1"/>
        <end position="37"/>
    </location>
</feature>
<feature type="region of interest" description="Disordered" evidence="6">
    <location>
        <begin position="1172"/>
        <end position="1202"/>
    </location>
</feature>
<feature type="compositionally biased region" description="Pro residues" evidence="6">
    <location>
        <begin position="1"/>
        <end position="11"/>
    </location>
</feature>
<feature type="compositionally biased region" description="Polar residues" evidence="6">
    <location>
        <begin position="22"/>
        <end position="32"/>
    </location>
</feature>
<feature type="binding site" evidence="4">
    <location>
        <begin position="927"/>
        <end position="934"/>
    </location>
    <ligand>
        <name>ATP</name>
        <dbReference type="ChEBI" id="CHEBI:30616"/>
    </ligand>
</feature>
<feature type="glycosylation site" description="N-linked (GlcNAc...) asparagine" evidence="5">
    <location>
        <position position="149"/>
    </location>
</feature>
<feature type="glycosylation site" description="N-linked (GlcNAc...) asparagine" evidence="5">
    <location>
        <position position="157"/>
    </location>
</feature>
<feature type="glycosylation site" description="N-linked (GlcNAc...) asparagine" evidence="5">
    <location>
        <position position="356"/>
    </location>
</feature>
<feature type="glycosylation site" description="N-linked (GlcNAc...) asparagine" evidence="5">
    <location>
        <position position="819"/>
    </location>
</feature>
<feature type="glycosylation site" description="N-linked (GlcNAc...) asparagine" evidence="5">
    <location>
        <position position="895"/>
    </location>
</feature>
<feature type="glycosylation site" description="N-linked (GlcNAc...) asparagine" evidence="5">
    <location>
        <position position="912"/>
    </location>
</feature>
<feature type="glycosylation site" description="N-linked (GlcNAc...) asparagine" evidence="5">
    <location>
        <position position="1253"/>
    </location>
</feature>
<name>MDR1_TRIEC</name>
<protein>
    <recommendedName>
        <fullName evidence="8">ABC multidrug transporter MDR1</fullName>
    </recommendedName>
    <alternativeName>
        <fullName evidence="8">Multidrug resistance protein 1</fullName>
    </alternativeName>
</protein>
<accession>F2PLH2</accession>
<reference key="1">
    <citation type="journal article" date="2012" name="MBio">
        <title>Comparative genome analysis of Trichophyton rubrum and related dermatophytes reveals candidate genes involved in infection.</title>
        <authorList>
            <person name="Martinez D.A."/>
            <person name="Oliver B.G."/>
            <person name="Graeser Y."/>
            <person name="Goldberg J.M."/>
            <person name="Li W."/>
            <person name="Martinez-Rossi N.M."/>
            <person name="Monod M."/>
            <person name="Shelest E."/>
            <person name="Barton R.C."/>
            <person name="Birch E."/>
            <person name="Brakhage A.A."/>
            <person name="Chen Z."/>
            <person name="Gurr S.J."/>
            <person name="Heiman D."/>
            <person name="Heitman J."/>
            <person name="Kosti I."/>
            <person name="Rossi A."/>
            <person name="Saif S."/>
            <person name="Samalova M."/>
            <person name="Saunders C.W."/>
            <person name="Shea T."/>
            <person name="Summerbell R.C."/>
            <person name="Xu J."/>
            <person name="Young S."/>
            <person name="Zeng Q."/>
            <person name="Birren B.W."/>
            <person name="Cuomo C.A."/>
            <person name="White T.C."/>
        </authorList>
    </citation>
    <scope>NUCLEOTIDE SEQUENCE [LARGE SCALE GENOMIC DNA]</scope>
    <source>
        <strain>ATCC MYA-4606 / CBS 127.97</strain>
    </source>
</reference>
<reference key="2">
    <citation type="journal article" date="2016" name="J. Med. Microbiol.">
        <title>Compensatory expression of multidrug-resistance genes encoding ABC transporters in dermatophytes.</title>
        <authorList>
            <person name="Martins M.P."/>
            <person name="Franceschini A.C.C."/>
            <person name="Jacob T.R."/>
            <person name="Rossi A."/>
            <person name="Martinez-Rossi N.M."/>
        </authorList>
    </citation>
    <scope>INDUCTION</scope>
</reference>
<dbReference type="EMBL" id="DS995723">
    <property type="protein sequence ID" value="EGE02537.1"/>
    <property type="molecule type" value="Genomic_DNA"/>
</dbReference>
<dbReference type="SMR" id="F2PLH2"/>
<dbReference type="GlyCosmos" id="F2PLH2">
    <property type="glycosylation" value="7 sites, No reported glycans"/>
</dbReference>
<dbReference type="VEuPathDB" id="FungiDB:TEQG_01571"/>
<dbReference type="eggNOG" id="KOG0065">
    <property type="taxonomic scope" value="Eukaryota"/>
</dbReference>
<dbReference type="HOGENOM" id="CLU_000604_35_0_1"/>
<dbReference type="OrthoDB" id="1446at34384"/>
<dbReference type="Proteomes" id="UP000009169">
    <property type="component" value="Unassembled WGS sequence"/>
</dbReference>
<dbReference type="GO" id="GO:0005886">
    <property type="term" value="C:plasma membrane"/>
    <property type="evidence" value="ECO:0007669"/>
    <property type="project" value="UniProtKB-SubCell"/>
</dbReference>
<dbReference type="GO" id="GO:0140359">
    <property type="term" value="F:ABC-type transporter activity"/>
    <property type="evidence" value="ECO:0007669"/>
    <property type="project" value="InterPro"/>
</dbReference>
<dbReference type="GO" id="GO:0005524">
    <property type="term" value="F:ATP binding"/>
    <property type="evidence" value="ECO:0007669"/>
    <property type="project" value="UniProtKB-KW"/>
</dbReference>
<dbReference type="GO" id="GO:0016887">
    <property type="term" value="F:ATP hydrolysis activity"/>
    <property type="evidence" value="ECO:0007669"/>
    <property type="project" value="InterPro"/>
</dbReference>
<dbReference type="CDD" id="cd03233">
    <property type="entry name" value="ABCG_PDR_domain1"/>
    <property type="match status" value="1"/>
</dbReference>
<dbReference type="CDD" id="cd03232">
    <property type="entry name" value="ABCG_PDR_domain2"/>
    <property type="match status" value="1"/>
</dbReference>
<dbReference type="FunFam" id="3.40.50.300:FF:000054">
    <property type="entry name" value="ABC multidrug transporter atrF"/>
    <property type="match status" value="1"/>
</dbReference>
<dbReference type="Gene3D" id="3.40.50.300">
    <property type="entry name" value="P-loop containing nucleotide triphosphate hydrolases"/>
    <property type="match status" value="2"/>
</dbReference>
<dbReference type="InterPro" id="IPR003593">
    <property type="entry name" value="AAA+_ATPase"/>
</dbReference>
<dbReference type="InterPro" id="IPR013525">
    <property type="entry name" value="ABC2_TM"/>
</dbReference>
<dbReference type="InterPro" id="IPR029481">
    <property type="entry name" value="ABC_trans_N"/>
</dbReference>
<dbReference type="InterPro" id="IPR003439">
    <property type="entry name" value="ABC_transporter-like_ATP-bd"/>
</dbReference>
<dbReference type="InterPro" id="IPR017871">
    <property type="entry name" value="ABC_transporter-like_CS"/>
</dbReference>
<dbReference type="InterPro" id="IPR043926">
    <property type="entry name" value="ABCG_dom"/>
</dbReference>
<dbReference type="InterPro" id="IPR034001">
    <property type="entry name" value="ABCG_PDR_1"/>
</dbReference>
<dbReference type="InterPro" id="IPR034003">
    <property type="entry name" value="ABCG_PDR_2"/>
</dbReference>
<dbReference type="InterPro" id="IPR027417">
    <property type="entry name" value="P-loop_NTPase"/>
</dbReference>
<dbReference type="InterPro" id="IPR010929">
    <property type="entry name" value="PDR_CDR_ABC"/>
</dbReference>
<dbReference type="PANTHER" id="PTHR19241">
    <property type="entry name" value="ATP-BINDING CASSETTE TRANSPORTER"/>
    <property type="match status" value="1"/>
</dbReference>
<dbReference type="Pfam" id="PF01061">
    <property type="entry name" value="ABC2_membrane"/>
    <property type="match status" value="2"/>
</dbReference>
<dbReference type="Pfam" id="PF19055">
    <property type="entry name" value="ABC2_membrane_7"/>
    <property type="match status" value="1"/>
</dbReference>
<dbReference type="Pfam" id="PF00005">
    <property type="entry name" value="ABC_tran"/>
    <property type="match status" value="2"/>
</dbReference>
<dbReference type="Pfam" id="PF14510">
    <property type="entry name" value="ABC_trans_N"/>
    <property type="match status" value="1"/>
</dbReference>
<dbReference type="Pfam" id="PF06422">
    <property type="entry name" value="PDR_CDR"/>
    <property type="match status" value="2"/>
</dbReference>
<dbReference type="SMART" id="SM00382">
    <property type="entry name" value="AAA"/>
    <property type="match status" value="2"/>
</dbReference>
<dbReference type="SUPFAM" id="SSF52540">
    <property type="entry name" value="P-loop containing nucleoside triphosphate hydrolases"/>
    <property type="match status" value="2"/>
</dbReference>
<dbReference type="PROSITE" id="PS00211">
    <property type="entry name" value="ABC_TRANSPORTER_1"/>
    <property type="match status" value="1"/>
</dbReference>
<dbReference type="PROSITE" id="PS50893">
    <property type="entry name" value="ABC_TRANSPORTER_2"/>
    <property type="match status" value="2"/>
</dbReference>